<accession>Q58318</accession>
<dbReference type="EMBL" id="L77117">
    <property type="protein sequence ID" value="AAB98910.1"/>
    <property type="molecule type" value="Genomic_DNA"/>
</dbReference>
<dbReference type="PIR" id="D64413">
    <property type="entry name" value="D64413"/>
</dbReference>
<dbReference type="SMR" id="Q58318"/>
<dbReference type="FunCoup" id="Q58318">
    <property type="interactions" value="141"/>
</dbReference>
<dbReference type="STRING" id="243232.MJ_0908"/>
<dbReference type="PaxDb" id="243232-MJ_0908"/>
<dbReference type="EnsemblBacteria" id="AAB98910">
    <property type="protein sequence ID" value="AAB98910"/>
    <property type="gene ID" value="MJ_0908"/>
</dbReference>
<dbReference type="KEGG" id="mja:MJ_0908"/>
<dbReference type="eggNOG" id="arCOG03022">
    <property type="taxonomic scope" value="Archaea"/>
</dbReference>
<dbReference type="HOGENOM" id="CLU_002017_1_0_2"/>
<dbReference type="InParanoid" id="Q58318"/>
<dbReference type="PhylomeDB" id="Q58318"/>
<dbReference type="Proteomes" id="UP000000805">
    <property type="component" value="Chromosome"/>
</dbReference>
<dbReference type="GO" id="GO:0051116">
    <property type="term" value="F:cobaltochelatase activity"/>
    <property type="evidence" value="ECO:0007669"/>
    <property type="project" value="InterPro"/>
</dbReference>
<dbReference type="GO" id="GO:0016851">
    <property type="term" value="F:magnesium chelatase activity"/>
    <property type="evidence" value="ECO:0007669"/>
    <property type="project" value="InterPro"/>
</dbReference>
<dbReference type="GO" id="GO:0015995">
    <property type="term" value="P:chlorophyll biosynthetic process"/>
    <property type="evidence" value="ECO:0007669"/>
    <property type="project" value="InterPro"/>
</dbReference>
<dbReference type="GO" id="GO:0009236">
    <property type="term" value="P:cobalamin biosynthetic process"/>
    <property type="evidence" value="ECO:0007669"/>
    <property type="project" value="InterPro"/>
</dbReference>
<dbReference type="CDD" id="cd10150">
    <property type="entry name" value="CobN_like"/>
    <property type="match status" value="1"/>
</dbReference>
<dbReference type="InterPro" id="IPR011771">
    <property type="entry name" value="BchH"/>
</dbReference>
<dbReference type="InterPro" id="IPR011953">
    <property type="entry name" value="Cobalto_CobN"/>
</dbReference>
<dbReference type="InterPro" id="IPR003672">
    <property type="entry name" value="CobN/Mg_chltase"/>
</dbReference>
<dbReference type="InterPro" id="IPR017853">
    <property type="entry name" value="Glycoside_hydrolase_SF"/>
</dbReference>
<dbReference type="NCBIfam" id="TIGR02025">
    <property type="entry name" value="BchH"/>
    <property type="match status" value="1"/>
</dbReference>
<dbReference type="NCBIfam" id="TIGR02257">
    <property type="entry name" value="cobalto_cobN"/>
    <property type="match status" value="1"/>
</dbReference>
<dbReference type="PANTHER" id="PTHR44119:SF4">
    <property type="entry name" value="AEROBIC COBALTOCHELATASE SUBUNIT COBN"/>
    <property type="match status" value="1"/>
</dbReference>
<dbReference type="PANTHER" id="PTHR44119">
    <property type="entry name" value="MAGNESIUM-CHELATASE SUBUNIT CHLH, CHLOROPLASTIC"/>
    <property type="match status" value="1"/>
</dbReference>
<dbReference type="Pfam" id="PF02514">
    <property type="entry name" value="CobN-Mg_chel"/>
    <property type="match status" value="1"/>
</dbReference>
<dbReference type="SUPFAM" id="SSF51445">
    <property type="entry name" value="(Trans)glycosidases"/>
    <property type="match status" value="1"/>
</dbReference>
<proteinExistence type="inferred from homology"/>
<evidence type="ECO:0000305" key="1"/>
<comment type="similarity">
    <text evidence="1">Belongs to the Mg-chelatase subunit H family.</text>
</comment>
<feature type="chain" id="PRO_0000219887" description="Uncharacterized protein MJ0908">
    <location>
        <begin position="1"/>
        <end position="1232"/>
    </location>
</feature>
<reference key="1">
    <citation type="journal article" date="1996" name="Science">
        <title>Complete genome sequence of the methanogenic archaeon, Methanococcus jannaschii.</title>
        <authorList>
            <person name="Bult C.J."/>
            <person name="White O."/>
            <person name="Olsen G.J."/>
            <person name="Zhou L."/>
            <person name="Fleischmann R.D."/>
            <person name="Sutton G.G."/>
            <person name="Blake J.A."/>
            <person name="FitzGerald L.M."/>
            <person name="Clayton R.A."/>
            <person name="Gocayne J.D."/>
            <person name="Kerlavage A.R."/>
            <person name="Dougherty B.A."/>
            <person name="Tomb J.-F."/>
            <person name="Adams M.D."/>
            <person name="Reich C.I."/>
            <person name="Overbeek R."/>
            <person name="Kirkness E.F."/>
            <person name="Weinstock K.G."/>
            <person name="Merrick J.M."/>
            <person name="Glodek A."/>
            <person name="Scott J.L."/>
            <person name="Geoghagen N.S.M."/>
            <person name="Weidman J.F."/>
            <person name="Fuhrmann J.L."/>
            <person name="Nguyen D."/>
            <person name="Utterback T.R."/>
            <person name="Kelley J.M."/>
            <person name="Peterson J.D."/>
            <person name="Sadow P.W."/>
            <person name="Hanna M.C."/>
            <person name="Cotton M.D."/>
            <person name="Roberts K.M."/>
            <person name="Hurst M.A."/>
            <person name="Kaine B.P."/>
            <person name="Borodovsky M."/>
            <person name="Klenk H.-P."/>
            <person name="Fraser C.M."/>
            <person name="Smith H.O."/>
            <person name="Woese C.R."/>
            <person name="Venter J.C."/>
        </authorList>
    </citation>
    <scope>NUCLEOTIDE SEQUENCE [LARGE SCALE GENOMIC DNA]</scope>
    <source>
        <strain>ATCC 43067 / DSM 2661 / JAL-1 / JCM 10045 / NBRC 100440</strain>
    </source>
</reference>
<organism>
    <name type="scientific">Methanocaldococcus jannaschii (strain ATCC 43067 / DSM 2661 / JAL-1 / JCM 10045 / NBRC 100440)</name>
    <name type="common">Methanococcus jannaschii</name>
    <dbReference type="NCBI Taxonomy" id="243232"/>
    <lineage>
        <taxon>Archaea</taxon>
        <taxon>Methanobacteriati</taxon>
        <taxon>Methanobacteriota</taxon>
        <taxon>Methanomada group</taxon>
        <taxon>Methanococci</taxon>
        <taxon>Methanococcales</taxon>
        <taxon>Methanocaldococcaceae</taxon>
        <taxon>Methanocaldococcus</taxon>
    </lineage>
</organism>
<gene>
    <name type="ordered locus">MJ0908</name>
</gene>
<protein>
    <recommendedName>
        <fullName>Uncharacterized protein MJ0908</fullName>
    </recommendedName>
</protein>
<sequence>MVILMIKIGFVSTIDSDDLVFEEAYKEIKKYGIEFKILDYKCSRKEFEEFLEFIKEANIVFTKLMGGKNAFKYYDELAEFCKRHNIPFLPLPTISEIHPDLEKDRTVDDDVKNKVVKYLGYEGVYNYKNLLLYLANRFGNLNVEYEEPRPMPWQGIYYKGKYFETLDDYLNYLKELGRDLDKPIIGVLFYRNWFVANNIDYVNDLIDIIENKGAIPIAVFSSHLKNELGSIGTLETFKRFFYKDGKPIVHALINTTMFTLSMGVKAELLKDEPEFLKELNVPILQGIISTGFIEDWKKSVSGLNPIDLIIGMAMPEFDGAIIHFPIGGKEKIKDGEVGVPIIKYRAIRDRAEKIVDLALRYANLKLKSNKDKKIAIIFHNYPPRNDKIASAFGLDSPESVVNILKEMKKRGFIVDEIPKNGTELIKKMLNYATNDKRFLTEEMIKKAVGKVKKEDYEKWFNSLSEKVKQELIKNWGAIPGDVMNFDGELIIPGIINGNVFISVQPPRGFGENPSAIYHSPDLPPTHYYIAFYKWIKDVFKADAIMHIGKHGNLEWLPGKCVGLSNECYPDICMELPNIYPFIVNNPGEGTQAKRRSYATIISHLIPPMTISDLYGDLVELEKSIDDYYETENKEKKEFLKKEILKKIKELKLDEDLLDGKVIDEEINDENFEKLLNKIHDYLETLKNRQINDGLHIMGVPLEGDKLVNMLFMIIRYQFNYLEILAEILDYSWEELNENKGKYHKILDEINEIGLNLLKEYMQYNFDENKIDELKTVKINSKLRDVLKTVSTIYKNLMKVDEEIINAVNALEGFYIPPRVAGAPTKDINCLPTGRNFYSCNPQEIPTKSAYEMGKKLAEDLINKYLKEEGKYPEYIGVIVWGSPTMRTKGDDIGEILYLLGVKPVWNKMGRVVGLEVIPLEELGRPRIDVTLRISGLFRDTFPNVVELIDEAIKMVANLDEPDEMNYVKKHYREEVEEKIKKGIDEKTAKETSLYRIFSDKPGCYGAGVSHLIDEKNWESIEDFAKVYVEWGGYAYGKGYYGVEAKEEFINRLSKIELTVKNEDSQEWDIFEGDDFNSYHGGLIASVTYYSGKKPVSYVGDTSNPNDIRTKHLKEEGKEIFRTKIMNPKWIEGMKRHGYKGAADFSKYVDHMFAWDATSGIIDDWMYEKIAEKYVFDKDMEEFFKENNPYALLNITERLLEAIERGMWKADEEMKEKLRKKYLEIEGMIEEKL</sequence>
<keyword id="KW-1185">Reference proteome</keyword>
<name>Y908_METJA</name>